<name>P4KG3_ARATH</name>
<evidence type="ECO:0000250" key="1"/>
<evidence type="ECO:0000250" key="2">
    <source>
        <dbReference type="UniProtKB" id="Q9BTU6"/>
    </source>
</evidence>
<evidence type="ECO:0000255" key="3">
    <source>
        <dbReference type="PROSITE-ProRule" id="PRU00214"/>
    </source>
</evidence>
<evidence type="ECO:0000255" key="4">
    <source>
        <dbReference type="PROSITE-ProRule" id="PRU00269"/>
    </source>
</evidence>
<evidence type="ECO:0000305" key="5"/>
<dbReference type="EC" id="2.7.1.67"/>
<dbReference type="EMBL" id="AB006701">
    <property type="protein sequence ID" value="BAB10389.1"/>
    <property type="molecule type" value="Genomic_DNA"/>
</dbReference>
<dbReference type="EMBL" id="CP002688">
    <property type="protein sequence ID" value="AED93274.1"/>
    <property type="molecule type" value="Genomic_DNA"/>
</dbReference>
<dbReference type="EMBL" id="CP002688">
    <property type="protein sequence ID" value="ANM68289.1"/>
    <property type="molecule type" value="Genomic_DNA"/>
</dbReference>
<dbReference type="EMBL" id="AK226621">
    <property type="protein sequence ID" value="BAE98733.1"/>
    <property type="molecule type" value="mRNA"/>
</dbReference>
<dbReference type="RefSeq" id="NP_001318634.1">
    <property type="nucleotide sequence ID" value="NM_001343856.1"/>
</dbReference>
<dbReference type="RefSeq" id="NP_197812.1">
    <property type="nucleotide sequence ID" value="NM_122330.2"/>
</dbReference>
<dbReference type="SMR" id="Q9FNF8"/>
<dbReference type="FunCoup" id="Q9FNF8">
    <property type="interactions" value="541"/>
</dbReference>
<dbReference type="STRING" id="3702.Q9FNF8"/>
<dbReference type="iPTMnet" id="Q9FNF8"/>
<dbReference type="PaxDb" id="3702-AT5G24240.1"/>
<dbReference type="ProteomicsDB" id="250923"/>
<dbReference type="EnsemblPlants" id="AT5G24240.1">
    <property type="protein sequence ID" value="AT5G24240.1"/>
    <property type="gene ID" value="AT5G24240"/>
</dbReference>
<dbReference type="EnsemblPlants" id="AT5G24240.2">
    <property type="protein sequence ID" value="AT5G24240.2"/>
    <property type="gene ID" value="AT5G24240"/>
</dbReference>
<dbReference type="GeneID" id="832491"/>
<dbReference type="Gramene" id="AT5G24240.1">
    <property type="protein sequence ID" value="AT5G24240.1"/>
    <property type="gene ID" value="AT5G24240"/>
</dbReference>
<dbReference type="Gramene" id="AT5G24240.2">
    <property type="protein sequence ID" value="AT5G24240.2"/>
    <property type="gene ID" value="AT5G24240"/>
</dbReference>
<dbReference type="KEGG" id="ath:AT5G24240"/>
<dbReference type="Araport" id="AT5G24240"/>
<dbReference type="TAIR" id="AT5G24240">
    <property type="gene designation" value="ATPI4KGAMMA3"/>
</dbReference>
<dbReference type="eggNOG" id="KOG0001">
    <property type="taxonomic scope" value="Eukaryota"/>
</dbReference>
<dbReference type="eggNOG" id="KOG2381">
    <property type="taxonomic scope" value="Eukaryota"/>
</dbReference>
<dbReference type="HOGENOM" id="CLU_023603_0_0_1"/>
<dbReference type="InParanoid" id="Q9FNF8"/>
<dbReference type="OMA" id="MGYRVFP"/>
<dbReference type="PhylomeDB" id="Q9FNF8"/>
<dbReference type="PRO" id="PR:Q9FNF8"/>
<dbReference type="Proteomes" id="UP000006548">
    <property type="component" value="Chromosome 5"/>
</dbReference>
<dbReference type="ExpressionAtlas" id="Q9FNF8">
    <property type="expression patterns" value="baseline and differential"/>
</dbReference>
<dbReference type="GO" id="GO:0005634">
    <property type="term" value="C:nucleus"/>
    <property type="evidence" value="ECO:0000314"/>
    <property type="project" value="TAIR"/>
</dbReference>
<dbReference type="GO" id="GO:0005777">
    <property type="term" value="C:peroxisome"/>
    <property type="evidence" value="ECO:0000314"/>
    <property type="project" value="TAIR"/>
</dbReference>
<dbReference type="GO" id="GO:0004430">
    <property type="term" value="F:1-phosphatidylinositol 4-kinase activity"/>
    <property type="evidence" value="ECO:0007669"/>
    <property type="project" value="UniProtKB-EC"/>
</dbReference>
<dbReference type="GO" id="GO:0005524">
    <property type="term" value="F:ATP binding"/>
    <property type="evidence" value="ECO:0007669"/>
    <property type="project" value="UniProtKB-KW"/>
</dbReference>
<dbReference type="GO" id="GO:0016301">
    <property type="term" value="F:kinase activity"/>
    <property type="evidence" value="ECO:0000314"/>
    <property type="project" value="TAIR"/>
</dbReference>
<dbReference type="GO" id="GO:0035091">
    <property type="term" value="F:phosphatidylinositol binding"/>
    <property type="evidence" value="ECO:0000314"/>
    <property type="project" value="TAIR"/>
</dbReference>
<dbReference type="GO" id="GO:0009909">
    <property type="term" value="P:regulation of flower development"/>
    <property type="evidence" value="ECO:0000315"/>
    <property type="project" value="TAIR"/>
</dbReference>
<dbReference type="GO" id="GO:0009737">
    <property type="term" value="P:response to abscisic acid"/>
    <property type="evidence" value="ECO:0000315"/>
    <property type="project" value="TAIR"/>
</dbReference>
<dbReference type="GO" id="GO:1902074">
    <property type="term" value="P:response to salt"/>
    <property type="evidence" value="ECO:0000315"/>
    <property type="project" value="TAIR"/>
</dbReference>
<dbReference type="CDD" id="cd17039">
    <property type="entry name" value="Ubl_ubiquitin_like"/>
    <property type="match status" value="1"/>
</dbReference>
<dbReference type="FunFam" id="3.10.20.90:FF:000307">
    <property type="entry name" value="Phosphatidylinositol 4-kinase gamma 4"/>
    <property type="match status" value="1"/>
</dbReference>
<dbReference type="Gene3D" id="3.10.20.90">
    <property type="entry name" value="Phosphatidylinositol 3-kinase Catalytic Subunit, Chain A, domain 1"/>
    <property type="match status" value="2"/>
</dbReference>
<dbReference type="InterPro" id="IPR011009">
    <property type="entry name" value="Kinase-like_dom_sf"/>
</dbReference>
<dbReference type="InterPro" id="IPR044571">
    <property type="entry name" value="P4KG1-8"/>
</dbReference>
<dbReference type="InterPro" id="IPR000403">
    <property type="entry name" value="PI3/4_kinase_cat_dom"/>
</dbReference>
<dbReference type="InterPro" id="IPR000626">
    <property type="entry name" value="Ubiquitin-like_dom"/>
</dbReference>
<dbReference type="InterPro" id="IPR029071">
    <property type="entry name" value="Ubiquitin-like_domsf"/>
</dbReference>
<dbReference type="PANTHER" id="PTHR45800">
    <property type="entry name" value="PHOSPHATIDYLINOSITOL 4-KINASE GAMMA"/>
    <property type="match status" value="1"/>
</dbReference>
<dbReference type="PANTHER" id="PTHR45800:SF4">
    <property type="entry name" value="PHOSPHATIDYLINOSITOL 4-KINASE GAMMA 3"/>
    <property type="match status" value="1"/>
</dbReference>
<dbReference type="Pfam" id="PF00454">
    <property type="entry name" value="PI3_PI4_kinase"/>
    <property type="match status" value="1"/>
</dbReference>
<dbReference type="Pfam" id="PF00240">
    <property type="entry name" value="ubiquitin"/>
    <property type="match status" value="2"/>
</dbReference>
<dbReference type="SMART" id="SM00213">
    <property type="entry name" value="UBQ"/>
    <property type="match status" value="2"/>
</dbReference>
<dbReference type="SUPFAM" id="SSF56112">
    <property type="entry name" value="Protein kinase-like (PK-like)"/>
    <property type="match status" value="1"/>
</dbReference>
<dbReference type="SUPFAM" id="SSF54236">
    <property type="entry name" value="Ubiquitin-like"/>
    <property type="match status" value="2"/>
</dbReference>
<dbReference type="PROSITE" id="PS50290">
    <property type="entry name" value="PI3_4_KINASE_3"/>
    <property type="match status" value="1"/>
</dbReference>
<dbReference type="PROSITE" id="PS50053">
    <property type="entry name" value="UBIQUITIN_2"/>
    <property type="match status" value="2"/>
</dbReference>
<proteinExistence type="evidence at transcript level"/>
<feature type="chain" id="PRO_0000423361" description="Phosphatidylinositol 4-kinase gamma 3">
    <location>
        <begin position="1"/>
        <end position="574"/>
    </location>
</feature>
<feature type="domain" description="Ubiquitin-like 1" evidence="3">
    <location>
        <begin position="32"/>
        <end position="109"/>
    </location>
</feature>
<feature type="domain" description="Ubiquitin-like 2" evidence="3">
    <location>
        <begin position="110"/>
        <end position="188"/>
    </location>
</feature>
<feature type="domain" description="PI3K/PI4K catalytic" evidence="4">
    <location>
        <begin position="257"/>
        <end position="555"/>
    </location>
</feature>
<feature type="region of interest" description="G-loop" evidence="4">
    <location>
        <begin position="263"/>
        <end position="269"/>
    </location>
</feature>
<feature type="region of interest" description="Catalytic loop" evidence="4">
    <location>
        <begin position="414"/>
        <end position="422"/>
    </location>
</feature>
<feature type="region of interest" description="Activation loop" evidence="4">
    <location>
        <begin position="438"/>
        <end position="464"/>
    </location>
</feature>
<feature type="binding site" evidence="2">
    <location>
        <begin position="264"/>
        <end position="270"/>
    </location>
    <ligand>
        <name>ATP</name>
        <dbReference type="ChEBI" id="CHEBI:30616"/>
    </ligand>
</feature>
<feature type="binding site" evidence="2">
    <location>
        <position position="286"/>
    </location>
    <ligand>
        <name>ATP</name>
        <dbReference type="ChEBI" id="CHEBI:30616"/>
    </ligand>
</feature>
<feature type="binding site" evidence="2">
    <location>
        <begin position="381"/>
        <end position="384"/>
    </location>
    <ligand>
        <name>ATP</name>
        <dbReference type="ChEBI" id="CHEBI:30616"/>
    </ligand>
</feature>
<feature type="binding site" evidence="2">
    <location>
        <position position="440"/>
    </location>
    <ligand>
        <name>ATP</name>
        <dbReference type="ChEBI" id="CHEBI:30616"/>
    </ligand>
</feature>
<accession>Q9FNF8</accession>
<keyword id="KW-0067">ATP-binding</keyword>
<keyword id="KW-0418">Kinase</keyword>
<keyword id="KW-0547">Nucleotide-binding</keyword>
<keyword id="KW-1185">Reference proteome</keyword>
<keyword id="KW-0677">Repeat</keyword>
<keyword id="KW-0808">Transferase</keyword>
<organism>
    <name type="scientific">Arabidopsis thaliana</name>
    <name type="common">Mouse-ear cress</name>
    <dbReference type="NCBI Taxonomy" id="3702"/>
    <lineage>
        <taxon>Eukaryota</taxon>
        <taxon>Viridiplantae</taxon>
        <taxon>Streptophyta</taxon>
        <taxon>Embryophyta</taxon>
        <taxon>Tracheophyta</taxon>
        <taxon>Spermatophyta</taxon>
        <taxon>Magnoliopsida</taxon>
        <taxon>eudicotyledons</taxon>
        <taxon>Gunneridae</taxon>
        <taxon>Pentapetalae</taxon>
        <taxon>rosids</taxon>
        <taxon>malvids</taxon>
        <taxon>Brassicales</taxon>
        <taxon>Brassicaceae</taxon>
        <taxon>Camelineae</taxon>
        <taxon>Arabidopsis</taxon>
    </lineage>
</organism>
<gene>
    <name type="primary">PI4KG3</name>
    <name type="synonym">PI4KGAMMA3</name>
    <name type="ordered locus">At5g24240</name>
</gene>
<sequence>MSVASVALSPALEELVNFPGIIGRFGFNLDDPILVFLTIAGSVIPKRVMESDSIASVKLRIQSIKGFFVKKQKLLYDGREVSRNDSQIRDYGLADGKLLHLVIRLSDLQAISVRTVDGKEFELVVERSRNVGYVKQQIASKEKELGIPRDHELTLDGEELDDQRLITDLCQNGDNVIHLLISKSAKVRAKPVGKDFEVFIEDVNHKHNVDGRRGKNISSEAKPKEFFVEPFIVNPEIKLPILLKELISSTLEGLEKGNGPIRSSDGSGGAYFMQDPSGHKYVSVFKPIDEEPMAVNNPHGQPVSVDGEGLKKGTQVGEGAIREVAAYILDYPMTGPRTFPHDQTGFAGVPPTTMVKCLHKDFNHPNGYSFSPENTKIGSLQMFVSNVGSCEDMGYRVFPVDQVHKISVLDIRLANADRHAGNILVSRDGKDGQMVLTPIDHGYCFPNKFEDCTFEWLYWPQAKEPYSSETLEYIKSLDPEKDIELLRFHGWEIPPSCTRVLRISTMLLKKGSAKGLTPFTIGSIMCRETLKEESVIEQIIHDAEAIVPTETTEDEFISTVSAIMDNRLDQYAWN</sequence>
<comment type="function">
    <text evidence="1">The phosphorylation of phosphatidylinositol (PI) to PI4P is the first committed step in the generation of phosphatidylinositol 4,5-bisphosphate (PIP2), a precursor of the second messenger inositol 1,4,5-trisphosphate (InsP3).</text>
</comment>
<comment type="catalytic activity">
    <reaction>
        <text>a 1,2-diacyl-sn-glycero-3-phospho-(1D-myo-inositol) + ATP = a 1,2-diacyl-sn-glycero-3-phospho-(1D-myo-inositol 4-phosphate) + ADP + H(+)</text>
        <dbReference type="Rhea" id="RHEA:19877"/>
        <dbReference type="ChEBI" id="CHEBI:15378"/>
        <dbReference type="ChEBI" id="CHEBI:30616"/>
        <dbReference type="ChEBI" id="CHEBI:57880"/>
        <dbReference type="ChEBI" id="CHEBI:58178"/>
        <dbReference type="ChEBI" id="CHEBI:456216"/>
        <dbReference type="EC" id="2.7.1.67"/>
    </reaction>
</comment>
<comment type="similarity">
    <text evidence="5">Belongs to the PI3/PI4-kinase family. Type II PI4K subfamily.</text>
</comment>
<reference key="1">
    <citation type="journal article" date="1997" name="DNA Res.">
        <title>Structural analysis of Arabidopsis thaliana chromosome 5. II. Sequence features of the regions of 1,044,062 bp covered by thirteen physically assigned P1 clones.</title>
        <authorList>
            <person name="Kotani H."/>
            <person name="Nakamura Y."/>
            <person name="Sato S."/>
            <person name="Kaneko T."/>
            <person name="Asamizu E."/>
            <person name="Miyajima N."/>
            <person name="Tabata S."/>
        </authorList>
    </citation>
    <scope>NUCLEOTIDE SEQUENCE [LARGE SCALE GENOMIC DNA]</scope>
    <source>
        <strain>cv. Columbia</strain>
    </source>
</reference>
<reference key="2">
    <citation type="journal article" date="2017" name="Plant J.">
        <title>Araport11: a complete reannotation of the Arabidopsis thaliana reference genome.</title>
        <authorList>
            <person name="Cheng C.Y."/>
            <person name="Krishnakumar V."/>
            <person name="Chan A.P."/>
            <person name="Thibaud-Nissen F."/>
            <person name="Schobel S."/>
            <person name="Town C.D."/>
        </authorList>
    </citation>
    <scope>GENOME REANNOTATION</scope>
    <source>
        <strain>cv. Columbia</strain>
    </source>
</reference>
<reference key="3">
    <citation type="submission" date="2006-07" db="EMBL/GenBank/DDBJ databases">
        <title>Large-scale analysis of RIKEN Arabidopsis full-length (RAFL) cDNAs.</title>
        <authorList>
            <person name="Totoki Y."/>
            <person name="Seki M."/>
            <person name="Ishida J."/>
            <person name="Nakajima M."/>
            <person name="Enju A."/>
            <person name="Kamiya A."/>
            <person name="Narusaka M."/>
            <person name="Shin-i T."/>
            <person name="Nakagawa M."/>
            <person name="Sakamoto N."/>
            <person name="Oishi K."/>
            <person name="Kohara Y."/>
            <person name="Kobayashi M."/>
            <person name="Toyoda A."/>
            <person name="Sakaki Y."/>
            <person name="Sakurai T."/>
            <person name="Iida K."/>
            <person name="Akiyama K."/>
            <person name="Satou M."/>
            <person name="Toyoda T."/>
            <person name="Konagaya A."/>
            <person name="Carninci P."/>
            <person name="Kawai J."/>
            <person name="Hayashizaki Y."/>
            <person name="Shinozaki K."/>
        </authorList>
    </citation>
    <scope>NUCLEOTIDE SEQUENCE [LARGE SCALE MRNA]</scope>
    <source>
        <strain>cv. Columbia</strain>
    </source>
</reference>
<reference key="4">
    <citation type="journal article" date="2002" name="Plant Physiol.">
        <title>Inositol phospholipid metabolism in Arabidopsis. Characterized and putative isoforms of inositol phospholipid kinase and phosphoinositide-specific phospholipase C.</title>
        <authorList>
            <person name="Mueller-Roeber B."/>
            <person name="Pical C."/>
        </authorList>
    </citation>
    <scope>GENE FAMILY</scope>
    <scope>NOMENCLATURE</scope>
</reference>
<reference key="5">
    <citation type="journal article" date="2008" name="Biochem. J.">
        <title>Characterization of a new family of protein kinases from Arabidopsis containing phosphoinositide 3/4-kinase and ubiquitin-like domains.</title>
        <authorList>
            <person name="Galvao R.M."/>
            <person name="Kota U."/>
            <person name="Soderblom E.J."/>
            <person name="Goshe M.B."/>
            <person name="Boss W.F."/>
        </authorList>
    </citation>
    <scope>GENE FAMILY</scope>
</reference>
<protein>
    <recommendedName>
        <fullName>Phosphatidylinositol 4-kinase gamma 3</fullName>
        <shortName>AtPI4Kgamma3</shortName>
        <shortName>PI-4Kgamma3</shortName>
        <shortName>PI4K gamma 3</shortName>
        <ecNumber>2.7.1.67</ecNumber>
    </recommendedName>
</protein>